<organism>
    <name type="scientific">Phytoplasma australiense</name>
    <dbReference type="NCBI Taxonomy" id="59748"/>
    <lineage>
        <taxon>Bacteria</taxon>
        <taxon>Bacillati</taxon>
        <taxon>Mycoplasmatota</taxon>
        <taxon>Mollicutes</taxon>
        <taxon>Acholeplasmatales</taxon>
        <taxon>Acholeplasmataceae</taxon>
        <taxon>Candidatus Phytoplasma</taxon>
        <taxon>16SrXII (Stolbur group)</taxon>
    </lineage>
</organism>
<name>RPOB_PHYAS</name>
<sequence>MAYRNVKYGKKVERRNYSKIIYDVDLPNLIEIQNKSFNWFLKDGIEELLQDFCPIESYNGDLKIYFGECYSTGPKYSVEESKTKDASYVIQLFVKATLENTLTGETKKSSVLLTELPLITDTGTFIINGKERVAVSQIVRSSSVYYSSTFDVKLNKNLYSGQVIPARGAWIEYEEGSKEILYVKLDRSKKIPLSNFIYALGFNNREIIEKVFGKSPLLNSSFVKEEDMDTGNALIELYSKIRQGEKVPVDTARDFIRKRLFDQKKYDLTTVGRYKFNKKLDVLARAEKTYLVHDFVNLETKEIILPKHTFLTKDKIEILRKNRHFLLQELFDAQHNLENETDEEILTYKKDPQSRELYIKTNILNFRTGEIIFPKDTLVTDEVIKRLRKSIQLLDGKVIEFFLRSKDVYQKDLERTGVFNEILEVYLSKDEHDNLQHKVQIVGNNQKETKKHITLSDIIASISYYLNLYEGIGNVDDIDHLGNRRLRLIGELLKNQFRIGLTRAEKHIKDMISVSKFSEVGPGELVNFGFLNGVIKTFFANSRLSQFMDQINPLAELTQKRRVSALGVGGINRDRAGVEVRDVHNSHYGRLCPIETPEGPSIGLIASLAIYAKVDDYGFIQTPFFKVFVQNGASYVSNQIEYLTADQEKEEIIASSGYELNSDATFQKDKVIARKNGEIGIYPKEQVTYADISPKQIVSIATASIPFLEHNDSSRALMGSNMQRQAVPLLVTESPIVGTGIEYRAAKDSGSLIIASQPGIVTYVDAKKIVTSDQEGNKKEYQLTTFEKSNQDTLILQKPIVSLGDNIQKGDILVDGPSTNQGELALGRNILVAFMTWEGYNYEDAIIISEELVKNDVYTSVHINKYSVQTRELKKGSGKEEITREVPNVGADAIKNLDERGIIIPGSEVKEGDILVGKITPQGNVDPTPQEKLIQIVIGEKAREYKDSSLRVPYGEGGIVQSVQYFSRKNGDILPPGVNENIRVFIAKKRKISEGDKMAGRHGNKGVISRILPKEDLPFMEDGTTIDVMLNPLGVPSRMNIGQILEIHLGMSAKNLNIKVATPVFDGVNDQDLKEISQEANLELDGKKVLYDGRTGEPYENRISVGVMYMIKLSHMVDDKLHARNVGPYTLVTQQPMRGKIREGGQRYGEMENWAVHAHGAAYTLQEFLTIKSDDIIGRNQTYSAIVQGKQLPKPNIPESFRVLIKELQALGLYVELIKTDTKENEVNKSLIDYKKEGYN</sequence>
<gene>
    <name evidence="1" type="primary">rpoB</name>
    <name type="ordered locus">PA0665</name>
</gene>
<comment type="function">
    <text evidence="1">DNA-dependent RNA polymerase catalyzes the transcription of DNA into RNA using the four ribonucleoside triphosphates as substrates.</text>
</comment>
<comment type="catalytic activity">
    <reaction evidence="1">
        <text>RNA(n) + a ribonucleoside 5'-triphosphate = RNA(n+1) + diphosphate</text>
        <dbReference type="Rhea" id="RHEA:21248"/>
        <dbReference type="Rhea" id="RHEA-COMP:14527"/>
        <dbReference type="Rhea" id="RHEA-COMP:17342"/>
        <dbReference type="ChEBI" id="CHEBI:33019"/>
        <dbReference type="ChEBI" id="CHEBI:61557"/>
        <dbReference type="ChEBI" id="CHEBI:140395"/>
        <dbReference type="EC" id="2.7.7.6"/>
    </reaction>
</comment>
<comment type="subunit">
    <text evidence="1">The RNAP catalytic core consists of 2 alpha, 1 beta, 1 beta' and 1 omega subunit. When a sigma factor is associated with the core the holoenzyme is formed, which can initiate transcription.</text>
</comment>
<comment type="similarity">
    <text evidence="1">Belongs to the RNA polymerase beta chain family.</text>
</comment>
<proteinExistence type="inferred from homology"/>
<protein>
    <recommendedName>
        <fullName evidence="1">DNA-directed RNA polymerase subunit beta</fullName>
        <shortName evidence="1">RNAP subunit beta</shortName>
        <ecNumber evidence="1">2.7.7.6</ecNumber>
    </recommendedName>
    <alternativeName>
        <fullName evidence="1">RNA polymerase subunit beta</fullName>
    </alternativeName>
    <alternativeName>
        <fullName evidence="1">Transcriptase subunit beta</fullName>
    </alternativeName>
</protein>
<dbReference type="EC" id="2.7.7.6" evidence="1"/>
<dbReference type="EMBL" id="AM422018">
    <property type="protein sequence ID" value="CAM11999.1"/>
    <property type="molecule type" value="Genomic_DNA"/>
</dbReference>
<dbReference type="SMR" id="B1VAM6"/>
<dbReference type="STRING" id="59748.PA0665"/>
<dbReference type="KEGG" id="pal:PA0665"/>
<dbReference type="eggNOG" id="COG0085">
    <property type="taxonomic scope" value="Bacteria"/>
</dbReference>
<dbReference type="BRENDA" id="2.7.7.6">
    <property type="organism ID" value="28560"/>
</dbReference>
<dbReference type="Proteomes" id="UP000008323">
    <property type="component" value="Chromosome"/>
</dbReference>
<dbReference type="GO" id="GO:0000428">
    <property type="term" value="C:DNA-directed RNA polymerase complex"/>
    <property type="evidence" value="ECO:0007669"/>
    <property type="project" value="UniProtKB-KW"/>
</dbReference>
<dbReference type="GO" id="GO:0003677">
    <property type="term" value="F:DNA binding"/>
    <property type="evidence" value="ECO:0007669"/>
    <property type="project" value="UniProtKB-UniRule"/>
</dbReference>
<dbReference type="GO" id="GO:0003899">
    <property type="term" value="F:DNA-directed RNA polymerase activity"/>
    <property type="evidence" value="ECO:0007669"/>
    <property type="project" value="UniProtKB-UniRule"/>
</dbReference>
<dbReference type="GO" id="GO:0032549">
    <property type="term" value="F:ribonucleoside binding"/>
    <property type="evidence" value="ECO:0007669"/>
    <property type="project" value="InterPro"/>
</dbReference>
<dbReference type="GO" id="GO:0006351">
    <property type="term" value="P:DNA-templated transcription"/>
    <property type="evidence" value="ECO:0007669"/>
    <property type="project" value="UniProtKB-UniRule"/>
</dbReference>
<dbReference type="CDD" id="cd00653">
    <property type="entry name" value="RNA_pol_B_RPB2"/>
    <property type="match status" value="1"/>
</dbReference>
<dbReference type="Gene3D" id="2.40.50.100">
    <property type="match status" value="1"/>
</dbReference>
<dbReference type="Gene3D" id="3.90.1100.10">
    <property type="match status" value="2"/>
</dbReference>
<dbReference type="Gene3D" id="2.40.270.10">
    <property type="entry name" value="DNA-directed RNA polymerase, subunit 2, domain 6"/>
    <property type="match status" value="3"/>
</dbReference>
<dbReference type="Gene3D" id="3.90.1800.10">
    <property type="entry name" value="RNA polymerase alpha subunit dimerisation domain"/>
    <property type="match status" value="1"/>
</dbReference>
<dbReference type="Gene3D" id="3.90.1110.10">
    <property type="entry name" value="RNA polymerase Rpb2, domain 2"/>
    <property type="match status" value="1"/>
</dbReference>
<dbReference type="HAMAP" id="MF_01321">
    <property type="entry name" value="RNApol_bact_RpoB"/>
    <property type="match status" value="1"/>
</dbReference>
<dbReference type="InterPro" id="IPR019462">
    <property type="entry name" value="DNA-dir_RNA_pol_bsu_external_1"/>
</dbReference>
<dbReference type="InterPro" id="IPR015712">
    <property type="entry name" value="DNA-dir_RNA_pol_su2"/>
</dbReference>
<dbReference type="InterPro" id="IPR007120">
    <property type="entry name" value="DNA-dir_RNAP_su2_dom"/>
</dbReference>
<dbReference type="InterPro" id="IPR037033">
    <property type="entry name" value="DNA-dir_RNAP_su2_hyb_sf"/>
</dbReference>
<dbReference type="InterPro" id="IPR010243">
    <property type="entry name" value="RNA_pol_bsu_bac"/>
</dbReference>
<dbReference type="InterPro" id="IPR007121">
    <property type="entry name" value="RNA_pol_bsu_CS"/>
</dbReference>
<dbReference type="InterPro" id="IPR007644">
    <property type="entry name" value="RNA_pol_bsu_protrusion"/>
</dbReference>
<dbReference type="InterPro" id="IPR007642">
    <property type="entry name" value="RNA_pol_Rpb2_2"/>
</dbReference>
<dbReference type="InterPro" id="IPR037034">
    <property type="entry name" value="RNA_pol_Rpb2_2_sf"/>
</dbReference>
<dbReference type="InterPro" id="IPR007645">
    <property type="entry name" value="RNA_pol_Rpb2_3"/>
</dbReference>
<dbReference type="InterPro" id="IPR007641">
    <property type="entry name" value="RNA_pol_Rpb2_7"/>
</dbReference>
<dbReference type="NCBIfam" id="NF001616">
    <property type="entry name" value="PRK00405.1"/>
    <property type="match status" value="1"/>
</dbReference>
<dbReference type="NCBIfam" id="TIGR02013">
    <property type="entry name" value="rpoB"/>
    <property type="match status" value="1"/>
</dbReference>
<dbReference type="PANTHER" id="PTHR20856">
    <property type="entry name" value="DNA-DIRECTED RNA POLYMERASE I SUBUNIT 2"/>
    <property type="match status" value="1"/>
</dbReference>
<dbReference type="Pfam" id="PF04563">
    <property type="entry name" value="RNA_pol_Rpb2_1"/>
    <property type="match status" value="1"/>
</dbReference>
<dbReference type="Pfam" id="PF04561">
    <property type="entry name" value="RNA_pol_Rpb2_2"/>
    <property type="match status" value="2"/>
</dbReference>
<dbReference type="Pfam" id="PF04565">
    <property type="entry name" value="RNA_pol_Rpb2_3"/>
    <property type="match status" value="1"/>
</dbReference>
<dbReference type="Pfam" id="PF10385">
    <property type="entry name" value="RNA_pol_Rpb2_45"/>
    <property type="match status" value="1"/>
</dbReference>
<dbReference type="Pfam" id="PF00562">
    <property type="entry name" value="RNA_pol_Rpb2_6"/>
    <property type="match status" value="1"/>
</dbReference>
<dbReference type="Pfam" id="PF04560">
    <property type="entry name" value="RNA_pol_Rpb2_7"/>
    <property type="match status" value="1"/>
</dbReference>
<dbReference type="SUPFAM" id="SSF64484">
    <property type="entry name" value="beta and beta-prime subunits of DNA dependent RNA-polymerase"/>
    <property type="match status" value="1"/>
</dbReference>
<dbReference type="PROSITE" id="PS01166">
    <property type="entry name" value="RNA_POL_BETA"/>
    <property type="match status" value="1"/>
</dbReference>
<keyword id="KW-0240">DNA-directed RNA polymerase</keyword>
<keyword id="KW-0548">Nucleotidyltransferase</keyword>
<keyword id="KW-1185">Reference proteome</keyword>
<keyword id="KW-0804">Transcription</keyword>
<keyword id="KW-0808">Transferase</keyword>
<evidence type="ECO:0000255" key="1">
    <source>
        <dbReference type="HAMAP-Rule" id="MF_01321"/>
    </source>
</evidence>
<accession>B1VAM6</accession>
<feature type="chain" id="PRO_1000141717" description="DNA-directed RNA polymerase subunit beta">
    <location>
        <begin position="1"/>
        <end position="1240"/>
    </location>
</feature>
<reference key="1">
    <citation type="journal article" date="2008" name="J. Bacteriol.">
        <title>Comparative genome analysis of 'Candidatus Phytoplasma australiense' (subgroup tuf-Australia I; rp-A) and 'Ca. Phytoplasma asteris' strains OY-M and AY-WB.</title>
        <authorList>
            <person name="Tran-Nguyen L.T."/>
            <person name="Kube M."/>
            <person name="Schneider B."/>
            <person name="Reinhardt R."/>
            <person name="Gibb K.S."/>
        </authorList>
    </citation>
    <scope>NUCLEOTIDE SEQUENCE [LARGE SCALE GENOMIC DNA]</scope>
</reference>